<evidence type="ECO:0000255" key="1">
    <source>
        <dbReference type="HAMAP-Rule" id="MF_00273"/>
    </source>
</evidence>
<evidence type="ECO:0000305" key="2"/>
<reference key="1">
    <citation type="journal article" date="2002" name="J. Mol. Microbiol. Biotechnol.">
        <title>The genome of Methanosarcina mazei: evidence for lateral gene transfer between Bacteria and Archaea.</title>
        <authorList>
            <person name="Deppenmeier U."/>
            <person name="Johann A."/>
            <person name="Hartsch T."/>
            <person name="Merkl R."/>
            <person name="Schmitz R.A."/>
            <person name="Martinez-Arias R."/>
            <person name="Henne A."/>
            <person name="Wiezer A."/>
            <person name="Baeumer S."/>
            <person name="Jacobi C."/>
            <person name="Brueggemann H."/>
            <person name="Lienard T."/>
            <person name="Christmann A."/>
            <person name="Boemecke M."/>
            <person name="Steckel S."/>
            <person name="Bhattacharyya A."/>
            <person name="Lykidis A."/>
            <person name="Overbeek R."/>
            <person name="Klenk H.-P."/>
            <person name="Gunsalus R.P."/>
            <person name="Fritz H.-J."/>
            <person name="Gottschalk G."/>
        </authorList>
    </citation>
    <scope>NUCLEOTIDE SEQUENCE [LARGE SCALE GENOMIC DNA]</scope>
    <source>
        <strain>ATCC BAA-159 / DSM 3647 / Goe1 / Go1 / JCM 11833 / OCM 88</strain>
    </source>
</reference>
<name>RL18A_METMA</name>
<protein>
    <recommendedName>
        <fullName evidence="1">Large ribosomal subunit protein eL20</fullName>
    </recommendedName>
    <alternativeName>
        <fullName evidence="2">50S ribosomal protein L18Ae</fullName>
    </alternativeName>
    <alternativeName>
        <fullName evidence="1">50S ribosomal protein L20e</fullName>
    </alternativeName>
    <alternativeName>
        <fullName evidence="1">50S ribosomal protein LX</fullName>
    </alternativeName>
</protein>
<sequence>MVMMKSFIVKGKFKAGNSWEKFTKKIESQNEKNATDKTYSIFGSKHGVKRSQIQIESVAEE</sequence>
<gene>
    <name evidence="1" type="primary">rpl18a</name>
    <name evidence="1" type="synonym">rpl20e</name>
    <name evidence="1" type="synonym">rplX</name>
    <name type="ordered locus">MM_0808</name>
</gene>
<keyword id="KW-0687">Ribonucleoprotein</keyword>
<keyword id="KW-0689">Ribosomal protein</keyword>
<keyword id="KW-0694">RNA-binding</keyword>
<keyword id="KW-0699">rRNA-binding</keyword>
<feature type="chain" id="PRO_0000153700" description="Large ribosomal subunit protein eL20">
    <location>
        <begin position="1"/>
        <end position="61"/>
    </location>
</feature>
<proteinExistence type="inferred from homology"/>
<comment type="subunit">
    <text evidence="1">Part of the 50S ribosomal subunit. Binds 23S rRNA.</text>
</comment>
<comment type="similarity">
    <text evidence="1">Belongs to the eukaryotic ribosomal protein eL20 family.</text>
</comment>
<dbReference type="EMBL" id="AE008384">
    <property type="protein sequence ID" value="AAM30504.1"/>
    <property type="molecule type" value="Genomic_DNA"/>
</dbReference>
<dbReference type="SMR" id="Q8PYQ2"/>
<dbReference type="KEGG" id="mma:MM_0808"/>
<dbReference type="PATRIC" id="fig|192952.21.peg.957"/>
<dbReference type="eggNOG" id="arCOG04175">
    <property type="taxonomic scope" value="Archaea"/>
</dbReference>
<dbReference type="HOGENOM" id="CLU_177460_1_1_2"/>
<dbReference type="Proteomes" id="UP000000595">
    <property type="component" value="Chromosome"/>
</dbReference>
<dbReference type="GO" id="GO:1990904">
    <property type="term" value="C:ribonucleoprotein complex"/>
    <property type="evidence" value="ECO:0007669"/>
    <property type="project" value="UniProtKB-KW"/>
</dbReference>
<dbReference type="GO" id="GO:0005840">
    <property type="term" value="C:ribosome"/>
    <property type="evidence" value="ECO:0007669"/>
    <property type="project" value="UniProtKB-KW"/>
</dbReference>
<dbReference type="GO" id="GO:0070180">
    <property type="term" value="F:large ribosomal subunit rRNA binding"/>
    <property type="evidence" value="ECO:0007669"/>
    <property type="project" value="UniProtKB-UniRule"/>
</dbReference>
<dbReference type="GO" id="GO:0003735">
    <property type="term" value="F:structural constituent of ribosome"/>
    <property type="evidence" value="ECO:0007669"/>
    <property type="project" value="InterPro"/>
</dbReference>
<dbReference type="GO" id="GO:0006412">
    <property type="term" value="P:translation"/>
    <property type="evidence" value="ECO:0007669"/>
    <property type="project" value="UniProtKB-UniRule"/>
</dbReference>
<dbReference type="Gene3D" id="3.10.20.10">
    <property type="match status" value="1"/>
</dbReference>
<dbReference type="HAMAP" id="MF_00273">
    <property type="entry name" value="Ribosomal_eL20"/>
    <property type="match status" value="1"/>
</dbReference>
<dbReference type="InterPro" id="IPR028877">
    <property type="entry name" value="Ribosomal_eL20"/>
</dbReference>
<dbReference type="InterPro" id="IPR023573">
    <property type="entry name" value="Ribosomal_eL20_dom"/>
</dbReference>
<dbReference type="NCBIfam" id="NF001981">
    <property type="entry name" value="PRK00773.1-1"/>
    <property type="match status" value="1"/>
</dbReference>
<dbReference type="Pfam" id="PF01775">
    <property type="entry name" value="Ribosomal_L18A"/>
    <property type="match status" value="1"/>
</dbReference>
<dbReference type="SUPFAM" id="SSF160374">
    <property type="entry name" value="RplX-like"/>
    <property type="match status" value="1"/>
</dbReference>
<accession>Q8PYQ2</accession>
<organism>
    <name type="scientific">Methanosarcina mazei (strain ATCC BAA-159 / DSM 3647 / Goe1 / Go1 / JCM 11833 / OCM 88)</name>
    <name type="common">Methanosarcina frisia</name>
    <dbReference type="NCBI Taxonomy" id="192952"/>
    <lineage>
        <taxon>Archaea</taxon>
        <taxon>Methanobacteriati</taxon>
        <taxon>Methanobacteriota</taxon>
        <taxon>Stenosarchaea group</taxon>
        <taxon>Methanomicrobia</taxon>
        <taxon>Methanosarcinales</taxon>
        <taxon>Methanosarcinaceae</taxon>
        <taxon>Methanosarcina</taxon>
    </lineage>
</organism>